<gene>
    <name evidence="6" type="primary">mutT1</name>
    <name evidence="9" type="ordered locus">MSMEG_2390</name>
    <name evidence="10" type="ordered locus">MSMEI_2330</name>
</gene>
<protein>
    <recommendedName>
        <fullName evidence="8">8-oxo-(d)GTP phosphatase</fullName>
        <shortName evidence="8">8-oxo-(d)GTPase</shortName>
        <ecNumber evidence="4">3.6.1.69</ecNumber>
    </recommendedName>
    <alternativeName>
        <fullName evidence="8">8-oxo-(d)GDP phosphatase</fullName>
        <ecNumber evidence="4">3.6.1.58</ecNumber>
    </alternativeName>
    <alternativeName>
        <fullName evidence="8">Diadenosine hexaphosphate hydrolase</fullName>
        <shortName evidence="8">Ap6A hydrolase</shortName>
        <ecNumber evidence="5">3.6.1.61</ecNumber>
    </alternativeName>
    <alternativeName>
        <fullName evidence="7">MsMutT1</fullName>
    </alternativeName>
</protein>
<feature type="chain" id="PRO_0000449349" description="8-oxo-(d)GTP phosphatase">
    <location>
        <begin position="1"/>
        <end position="322"/>
    </location>
</feature>
<feature type="domain" description="Nudix hydrolase" evidence="1">
    <location>
        <begin position="22"/>
        <end position="156"/>
    </location>
</feature>
<feature type="region of interest" description="Disordered" evidence="2">
    <location>
        <begin position="1"/>
        <end position="21"/>
    </location>
</feature>
<feature type="short sequence motif" description="Nudix box" evidence="1">
    <location>
        <begin position="66"/>
        <end position="87"/>
    </location>
</feature>
<feature type="binding site" evidence="4 5">
    <location>
        <begin position="55"/>
        <end position="58"/>
    </location>
    <ligand>
        <name>substrate</name>
    </ligand>
</feature>
<feature type="binding site" evidence="4">
    <location>
        <position position="60"/>
    </location>
    <ligand>
        <name>substrate</name>
    </ligand>
</feature>
<feature type="binding site" evidence="4 5">
    <location>
        <begin position="65"/>
        <end position="67"/>
    </location>
    <ligand>
        <name>substrate</name>
    </ligand>
</feature>
<feature type="binding site" evidence="4 5">
    <location>
        <position position="65"/>
    </location>
    <ligand>
        <name>Mg(2+)</name>
        <dbReference type="ChEBI" id="CHEBI:18420"/>
        <label>1</label>
    </ligand>
</feature>
<feature type="binding site" evidence="4 5">
    <location>
        <position position="81"/>
    </location>
    <ligand>
        <name>Mg(2+)</name>
        <dbReference type="ChEBI" id="CHEBI:18420"/>
        <label>2</label>
    </ligand>
</feature>
<feature type="binding site" evidence="4 5">
    <location>
        <position position="85"/>
    </location>
    <ligand>
        <name>Mg(2+)</name>
        <dbReference type="ChEBI" id="CHEBI:18420"/>
        <label>1</label>
    </ligand>
</feature>
<feature type="binding site" evidence="4 5">
    <location>
        <position position="85"/>
    </location>
    <ligand>
        <name>Mg(2+)</name>
        <dbReference type="ChEBI" id="CHEBI:18420"/>
        <label>2</label>
    </ligand>
</feature>
<feature type="binding site" evidence="4 5">
    <location>
        <position position="101"/>
    </location>
    <ligand>
        <name>substrate</name>
    </ligand>
</feature>
<feature type="binding site" evidence="4 5">
    <location>
        <position position="108"/>
    </location>
    <ligand>
        <name>substrate</name>
    </ligand>
</feature>
<feature type="binding site" evidence="4 5">
    <location>
        <position position="127"/>
    </location>
    <ligand>
        <name>Mg(2+)</name>
        <dbReference type="ChEBI" id="CHEBI:18420"/>
        <label>1</label>
    </ligand>
</feature>
<feature type="binding site" evidence="4 5">
    <location>
        <position position="127"/>
    </location>
    <ligand>
        <name>Mg(2+)</name>
        <dbReference type="ChEBI" id="CHEBI:18420"/>
        <label>2</label>
    </ligand>
</feature>
<feature type="binding site" evidence="4 5">
    <location>
        <position position="127"/>
    </location>
    <ligand>
        <name>substrate</name>
    </ligand>
</feature>
<feature type="binding site" evidence="4 5">
    <location>
        <position position="145"/>
    </location>
    <ligand>
        <name>substrate</name>
    </ligand>
</feature>
<feature type="strand" evidence="26">
    <location>
        <begin position="23"/>
        <end position="34"/>
    </location>
</feature>
<feature type="turn" evidence="25">
    <location>
        <begin position="44"/>
        <end position="46"/>
    </location>
</feature>
<feature type="strand" evidence="26">
    <location>
        <begin position="48"/>
        <end position="55"/>
    </location>
</feature>
<feature type="turn" evidence="26">
    <location>
        <begin position="56"/>
        <end position="59"/>
    </location>
</feature>
<feature type="strand" evidence="26">
    <location>
        <begin position="60"/>
        <end position="62"/>
    </location>
</feature>
<feature type="strand" evidence="26">
    <location>
        <begin position="65"/>
        <end position="67"/>
    </location>
</feature>
<feature type="helix" evidence="26">
    <location>
        <begin position="74"/>
        <end position="86"/>
    </location>
</feature>
<feature type="strand" evidence="26">
    <location>
        <begin position="88"/>
        <end position="103"/>
    </location>
</feature>
<feature type="strand" evidence="26">
    <location>
        <begin position="106"/>
        <end position="120"/>
    </location>
</feature>
<feature type="strand" evidence="26">
    <location>
        <begin position="129"/>
        <end position="135"/>
    </location>
</feature>
<feature type="helix" evidence="26">
    <location>
        <begin position="136"/>
        <end position="142"/>
    </location>
</feature>
<feature type="helix" evidence="26">
    <location>
        <begin position="146"/>
        <end position="156"/>
    </location>
</feature>
<feature type="strand" evidence="26">
    <location>
        <begin position="163"/>
        <end position="169"/>
    </location>
</feature>
<feature type="helix" evidence="26">
    <location>
        <begin position="176"/>
        <end position="178"/>
    </location>
</feature>
<feature type="helix" evidence="26">
    <location>
        <begin position="183"/>
        <end position="185"/>
    </location>
</feature>
<feature type="helix" evidence="26">
    <location>
        <begin position="190"/>
        <end position="205"/>
    </location>
</feature>
<feature type="strand" evidence="26">
    <location>
        <begin position="210"/>
        <end position="216"/>
    </location>
</feature>
<feature type="helix" evidence="26">
    <location>
        <begin position="217"/>
        <end position="230"/>
    </location>
</feature>
<feature type="strand" evidence="26">
    <location>
        <begin position="234"/>
        <end position="237"/>
    </location>
</feature>
<feature type="helix" evidence="26">
    <location>
        <begin position="238"/>
        <end position="240"/>
    </location>
</feature>
<feature type="helix" evidence="26">
    <location>
        <begin position="242"/>
        <end position="247"/>
    </location>
</feature>
<feature type="helix" evidence="26">
    <location>
        <begin position="249"/>
        <end position="261"/>
    </location>
</feature>
<feature type="strand" evidence="26">
    <location>
        <begin position="262"/>
        <end position="264"/>
    </location>
</feature>
<feature type="strand" evidence="26">
    <location>
        <begin position="266"/>
        <end position="270"/>
    </location>
</feature>
<feature type="turn" evidence="26">
    <location>
        <begin position="272"/>
        <end position="274"/>
    </location>
</feature>
<feature type="helix" evidence="26">
    <location>
        <begin position="275"/>
        <end position="286"/>
    </location>
</feature>
<feature type="strand" evidence="26">
    <location>
        <begin position="300"/>
        <end position="306"/>
    </location>
</feature>
<feature type="strand" evidence="26">
    <location>
        <begin position="309"/>
        <end position="316"/>
    </location>
</feature>
<organism>
    <name type="scientific">Mycolicibacterium smegmatis (strain ATCC 700084 / mc(2)155)</name>
    <name type="common">Mycobacterium smegmatis</name>
    <dbReference type="NCBI Taxonomy" id="246196"/>
    <lineage>
        <taxon>Bacteria</taxon>
        <taxon>Bacillati</taxon>
        <taxon>Actinomycetota</taxon>
        <taxon>Actinomycetes</taxon>
        <taxon>Mycobacteriales</taxon>
        <taxon>Mycobacteriaceae</taxon>
        <taxon>Mycolicibacterium</taxon>
    </lineage>
</organism>
<accession>A0QUZ2</accession>
<accession>I7FJ40</accession>
<reference key="1">
    <citation type="submission" date="2006-10" db="EMBL/GenBank/DDBJ databases">
        <authorList>
            <person name="Fleischmann R.D."/>
            <person name="Dodson R.J."/>
            <person name="Haft D.H."/>
            <person name="Merkel J.S."/>
            <person name="Nelson W.C."/>
            <person name="Fraser C.M."/>
        </authorList>
    </citation>
    <scope>NUCLEOTIDE SEQUENCE [LARGE SCALE GENOMIC DNA]</scope>
    <source>
        <strain>ATCC 700084 / mc(2)155</strain>
    </source>
</reference>
<reference key="2">
    <citation type="journal article" date="2007" name="Genome Biol.">
        <title>Interrupted coding sequences in Mycobacterium smegmatis: authentic mutations or sequencing errors?</title>
        <authorList>
            <person name="Deshayes C."/>
            <person name="Perrodou E."/>
            <person name="Gallien S."/>
            <person name="Euphrasie D."/>
            <person name="Schaeffer C."/>
            <person name="Van-Dorsselaer A."/>
            <person name="Poch O."/>
            <person name="Lecompte O."/>
            <person name="Reyrat J.-M."/>
        </authorList>
    </citation>
    <scope>NUCLEOTIDE SEQUENCE [LARGE SCALE GENOMIC DNA]</scope>
    <source>
        <strain>ATCC 700084 / mc(2)155</strain>
    </source>
</reference>
<reference key="3">
    <citation type="journal article" date="2009" name="Genome Res.">
        <title>Ortho-proteogenomics: multiple proteomes investigation through orthology and a new MS-based protocol.</title>
        <authorList>
            <person name="Gallien S."/>
            <person name="Perrodou E."/>
            <person name="Carapito C."/>
            <person name="Deshayes C."/>
            <person name="Reyrat J.-M."/>
            <person name="Van Dorsselaer A."/>
            <person name="Poch O."/>
            <person name="Schaeffer C."/>
            <person name="Lecompte O."/>
        </authorList>
    </citation>
    <scope>NUCLEOTIDE SEQUENCE [LARGE SCALE GENOMIC DNA]</scope>
    <source>
        <strain>ATCC 700084 / mc(2)155</strain>
    </source>
</reference>
<reference key="4">
    <citation type="journal article" date="2006" name="J. Bacteriol.">
        <title>Identification of Nudix hydrolase family members with an antimutator role in Mycobacterium tuberculosis and Mycobacterium smegmatis.</title>
        <authorList>
            <person name="Dos Vultos T."/>
            <person name="Blazquez J."/>
            <person name="Rauzier J."/>
            <person name="Matic I."/>
            <person name="Gicquel B."/>
        </authorList>
    </citation>
    <scope>FUNCTION</scope>
    <scope>DISRUPTION PHENOTYPE</scope>
    <source>
        <strain>ATCC 700084 / mc(2)155</strain>
    </source>
</reference>
<reference key="5">
    <citation type="journal article" date="2012" name="Acta Crystallogr. F">
        <title>Crystallization and preliminary X-ray studies of MutT1 (MSMEG_2390) from Mycobacterium smegmatis.</title>
        <authorList>
            <person name="Arif S.M."/>
            <person name="Patil A.G."/>
            <person name="Varshney U."/>
            <person name="Vijayan M."/>
        </authorList>
    </citation>
    <scope>CRYSTALLIZATION</scope>
    <source>
        <strain>ATCC 700084 / mc(2)155</strain>
    </source>
</reference>
<reference evidence="11 12 13 14 15 16 17 18 19" key="6">
    <citation type="journal article" date="2017" name="Acta Crystallogr. D">
        <title>Biochemical and structural studies of Mycobacterium smegmatis MutT1, a sanitization enzyme with unusual modes of association.</title>
        <authorList>
            <person name="Arif S.M."/>
            <person name="Patil A.G."/>
            <person name="Varshney U."/>
            <person name="Vijayan M."/>
        </authorList>
    </citation>
    <scope>X-RAY CRYSTALLOGRAPHY (1.10 ANGSTROMS) IN COMPLEXES WITH SUBSTRATE; SUBSTRATE ANALOGS AND MAGNESIUM</scope>
    <scope>FUNCTION</scope>
    <scope>CATALYTIC ACTIVITY</scope>
    <scope>COFACTOR</scope>
    <scope>SUBUNIT</scope>
    <scope>DOMAIN</scope>
    <source>
        <strain>ATCC 700084 / mc(2)155</strain>
    </source>
</reference>
<reference evidence="20 21 22 23 24" key="7">
    <citation type="journal article" date="2017" name="J. Struct. Biol.">
        <title>Hydrolysis of diadenosine polyphosphates. Exploration of an additional role of Mycobacterium smegmatis MutT1.</title>
        <authorList>
            <person name="Arif S.M."/>
            <person name="Varshney U."/>
            <person name="Vijayan M."/>
        </authorList>
    </citation>
    <scope>X-RAY CRYSTALLOGRAPHY (1.47 ANGSTROMS) IN COMPLEXES WITH DIADENOSINE POLYPHOSPHATES; ATP; MAGNESIUM AND MANGANESE</scope>
    <scope>FUNCTION</scope>
    <scope>CATALYTIC ACTIVITY</scope>
    <scope>COFACTOR</scope>
    <scope>ACTIVITY REGULATION</scope>
</reference>
<evidence type="ECO:0000255" key="1">
    <source>
        <dbReference type="PROSITE-ProRule" id="PRU00794"/>
    </source>
</evidence>
<evidence type="ECO:0000256" key="2">
    <source>
        <dbReference type="SAM" id="MobiDB-lite"/>
    </source>
</evidence>
<evidence type="ECO:0000269" key="3">
    <source>
    </source>
</evidence>
<evidence type="ECO:0000269" key="4">
    <source>
    </source>
</evidence>
<evidence type="ECO:0000269" key="5">
    <source>
    </source>
</evidence>
<evidence type="ECO:0000303" key="6">
    <source>
    </source>
</evidence>
<evidence type="ECO:0000303" key="7">
    <source>
    </source>
</evidence>
<evidence type="ECO:0000305" key="8"/>
<evidence type="ECO:0000312" key="9">
    <source>
        <dbReference type="EMBL" id="ABK74793.1"/>
    </source>
</evidence>
<evidence type="ECO:0000312" key="10">
    <source>
        <dbReference type="EMBL" id="AFP38798.1"/>
    </source>
</evidence>
<evidence type="ECO:0007744" key="11">
    <source>
        <dbReference type="PDB" id="5GG5"/>
    </source>
</evidence>
<evidence type="ECO:0007744" key="12">
    <source>
        <dbReference type="PDB" id="5GG6"/>
    </source>
</evidence>
<evidence type="ECO:0007744" key="13">
    <source>
        <dbReference type="PDB" id="5GG7"/>
    </source>
</evidence>
<evidence type="ECO:0007744" key="14">
    <source>
        <dbReference type="PDB" id="5GG8"/>
    </source>
</evidence>
<evidence type="ECO:0007744" key="15">
    <source>
        <dbReference type="PDB" id="5GG9"/>
    </source>
</evidence>
<evidence type="ECO:0007744" key="16">
    <source>
        <dbReference type="PDB" id="5GGA"/>
    </source>
</evidence>
<evidence type="ECO:0007744" key="17">
    <source>
        <dbReference type="PDB" id="5GGB"/>
    </source>
</evidence>
<evidence type="ECO:0007744" key="18">
    <source>
        <dbReference type="PDB" id="5GGC"/>
    </source>
</evidence>
<evidence type="ECO:0007744" key="19">
    <source>
        <dbReference type="PDB" id="5GGD"/>
    </source>
</evidence>
<evidence type="ECO:0007744" key="20">
    <source>
        <dbReference type="PDB" id="5XD1"/>
    </source>
</evidence>
<evidence type="ECO:0007744" key="21">
    <source>
        <dbReference type="PDB" id="5XD2"/>
    </source>
</evidence>
<evidence type="ECO:0007744" key="22">
    <source>
        <dbReference type="PDB" id="5XD3"/>
    </source>
</evidence>
<evidence type="ECO:0007744" key="23">
    <source>
        <dbReference type="PDB" id="5XD4"/>
    </source>
</evidence>
<evidence type="ECO:0007744" key="24">
    <source>
        <dbReference type="PDB" id="5XD5"/>
    </source>
</evidence>
<evidence type="ECO:0007829" key="25">
    <source>
        <dbReference type="PDB" id="5GG6"/>
    </source>
</evidence>
<evidence type="ECO:0007829" key="26">
    <source>
        <dbReference type="PDB" id="5GGB"/>
    </source>
</evidence>
<sequence>MMPVDDLQEIPLSKDTTEKSKHTVRAAGAVLWRDASEHGGTTGHPATVEVAVIHRPRYDDWSLPKGKLDQGETEPVAAAREIHEETGHTAVLGRRLGRVTYPIPQGTKRVWYWAAKSTGGDFSPNDEVDKLVWLPVDAAMDQLQYPDDRKVLRRFVKRPVDTKTVLVVRHGTAGRRSRYKGDDRKRPLDKRGRAQAEALVAQLMAFGATTLYAADRVRCHQTIEPLAQELDQLIHNEPLLTEEAYAADHKAARKRLLEIAGRPGNPVICTQGKVIPGLIEWWCERAKVRPETTGNRKGSTWVLSLSDGELVGADYLSPPDEK</sequence>
<proteinExistence type="evidence at protein level"/>
<name>MUTT1_MYCS2</name>
<keyword id="KW-0002">3D-structure</keyword>
<keyword id="KW-0227">DNA damage</keyword>
<keyword id="KW-0234">DNA repair</keyword>
<keyword id="KW-0235">DNA replication</keyword>
<keyword id="KW-0378">Hydrolase</keyword>
<keyword id="KW-0460">Magnesium</keyword>
<keyword id="KW-0479">Metal-binding</keyword>
<keyword id="KW-1185">Reference proteome</keyword>
<dbReference type="EC" id="3.6.1.69" evidence="4"/>
<dbReference type="EC" id="3.6.1.58" evidence="4"/>
<dbReference type="EC" id="3.6.1.61" evidence="5"/>
<dbReference type="EMBL" id="CP000480">
    <property type="protein sequence ID" value="ABK74793.1"/>
    <property type="molecule type" value="Genomic_DNA"/>
</dbReference>
<dbReference type="EMBL" id="CP001663">
    <property type="protein sequence ID" value="AFP38798.1"/>
    <property type="status" value="ALT_INIT"/>
    <property type="molecule type" value="Genomic_DNA"/>
</dbReference>
<dbReference type="RefSeq" id="WP_011728311.1">
    <property type="nucleotide sequence ID" value="NZ_SIJM01000012.1"/>
</dbReference>
<dbReference type="RefSeq" id="YP_886730.1">
    <property type="nucleotide sequence ID" value="NC_008596.1"/>
</dbReference>
<dbReference type="PDB" id="5GG5">
    <property type="method" value="X-ray"/>
    <property type="resolution" value="1.64 A"/>
    <property type="chains" value="A=1-322"/>
</dbReference>
<dbReference type="PDB" id="5GG6">
    <property type="method" value="X-ray"/>
    <property type="resolution" value="1.75 A"/>
    <property type="chains" value="A/B=1-322"/>
</dbReference>
<dbReference type="PDB" id="5GG7">
    <property type="method" value="X-ray"/>
    <property type="resolution" value="1.70 A"/>
    <property type="chains" value="A/B=1-322"/>
</dbReference>
<dbReference type="PDB" id="5GG8">
    <property type="method" value="X-ray"/>
    <property type="resolution" value="1.85 A"/>
    <property type="chains" value="A=1-322"/>
</dbReference>
<dbReference type="PDB" id="5GG9">
    <property type="method" value="X-ray"/>
    <property type="resolution" value="1.60 A"/>
    <property type="chains" value="A=1-322"/>
</dbReference>
<dbReference type="PDB" id="5GGA">
    <property type="method" value="X-ray"/>
    <property type="resolution" value="1.75 A"/>
    <property type="chains" value="A=1-322"/>
</dbReference>
<dbReference type="PDB" id="5GGB">
    <property type="method" value="X-ray"/>
    <property type="resolution" value="1.10 A"/>
    <property type="chains" value="A=1-322"/>
</dbReference>
<dbReference type="PDB" id="5GGC">
    <property type="method" value="X-ray"/>
    <property type="resolution" value="1.85 A"/>
    <property type="chains" value="A/B=1-322"/>
</dbReference>
<dbReference type="PDB" id="5GGD">
    <property type="method" value="X-ray"/>
    <property type="resolution" value="1.70 A"/>
    <property type="chains" value="A/B=1-322"/>
</dbReference>
<dbReference type="PDB" id="5XD1">
    <property type="method" value="X-ray"/>
    <property type="resolution" value="1.60 A"/>
    <property type="chains" value="A=1-322"/>
</dbReference>
<dbReference type="PDB" id="5XD2">
    <property type="method" value="X-ray"/>
    <property type="resolution" value="1.75 A"/>
    <property type="chains" value="A=1-322"/>
</dbReference>
<dbReference type="PDB" id="5XD3">
    <property type="method" value="X-ray"/>
    <property type="resolution" value="1.78 A"/>
    <property type="chains" value="A=1-322"/>
</dbReference>
<dbReference type="PDB" id="5XD4">
    <property type="method" value="X-ray"/>
    <property type="resolution" value="1.47 A"/>
    <property type="chains" value="A=1-322"/>
</dbReference>
<dbReference type="PDB" id="5XD5">
    <property type="method" value="X-ray"/>
    <property type="resolution" value="1.75 A"/>
    <property type="chains" value="A/B=1-322"/>
</dbReference>
<dbReference type="PDB" id="6M65">
    <property type="method" value="X-ray"/>
    <property type="resolution" value="1.44 A"/>
    <property type="chains" value="A=1-322"/>
</dbReference>
<dbReference type="PDB" id="6M69">
    <property type="method" value="X-ray"/>
    <property type="resolution" value="1.50 A"/>
    <property type="chains" value="A=1-322"/>
</dbReference>
<dbReference type="PDB" id="6M6Y">
    <property type="method" value="X-ray"/>
    <property type="resolution" value="1.50 A"/>
    <property type="chains" value="A=1-322"/>
</dbReference>
<dbReference type="PDB" id="6M72">
    <property type="method" value="X-ray"/>
    <property type="resolution" value="1.60 A"/>
    <property type="chains" value="A=1-322"/>
</dbReference>
<dbReference type="PDBsum" id="5GG5"/>
<dbReference type="PDBsum" id="5GG6"/>
<dbReference type="PDBsum" id="5GG7"/>
<dbReference type="PDBsum" id="5GG8"/>
<dbReference type="PDBsum" id="5GG9"/>
<dbReference type="PDBsum" id="5GGA"/>
<dbReference type="PDBsum" id="5GGB"/>
<dbReference type="PDBsum" id="5GGC"/>
<dbReference type="PDBsum" id="5GGD"/>
<dbReference type="PDBsum" id="5XD1"/>
<dbReference type="PDBsum" id="5XD2"/>
<dbReference type="PDBsum" id="5XD3"/>
<dbReference type="PDBsum" id="5XD4"/>
<dbReference type="PDBsum" id="5XD5"/>
<dbReference type="PDBsum" id="6M65"/>
<dbReference type="PDBsum" id="6M69"/>
<dbReference type="PDBsum" id="6M6Y"/>
<dbReference type="PDBsum" id="6M72"/>
<dbReference type="SMR" id="A0QUZ2"/>
<dbReference type="STRING" id="246196.MSMEG_2390"/>
<dbReference type="PaxDb" id="246196-MSMEI_2330"/>
<dbReference type="GeneID" id="93457181"/>
<dbReference type="KEGG" id="msg:MSMEI_2330"/>
<dbReference type="KEGG" id="msm:MSMEG_2390"/>
<dbReference type="PATRIC" id="fig|246196.19.peg.2354"/>
<dbReference type="eggNOG" id="COG0406">
    <property type="taxonomic scope" value="Bacteria"/>
</dbReference>
<dbReference type="eggNOG" id="COG0494">
    <property type="taxonomic scope" value="Bacteria"/>
</dbReference>
<dbReference type="OrthoDB" id="4287477at2"/>
<dbReference type="BRENDA" id="3.6.1.69">
    <property type="organism ID" value="3512"/>
</dbReference>
<dbReference type="Proteomes" id="UP000000757">
    <property type="component" value="Chromosome"/>
</dbReference>
<dbReference type="Proteomes" id="UP000006158">
    <property type="component" value="Chromosome"/>
</dbReference>
<dbReference type="GO" id="GO:0008413">
    <property type="term" value="F:8-oxo-7,8-dihydroguanosine triphosphate pyrophosphatase activity"/>
    <property type="evidence" value="ECO:0007669"/>
    <property type="project" value="UniProtKB-EC"/>
</dbReference>
<dbReference type="GO" id="GO:0044715">
    <property type="term" value="F:8-oxo-dGDP phosphatase activity"/>
    <property type="evidence" value="ECO:0007669"/>
    <property type="project" value="RHEA"/>
</dbReference>
<dbReference type="GO" id="GO:0044716">
    <property type="term" value="F:8-oxo-GDP phosphatase activity"/>
    <property type="evidence" value="ECO:0007669"/>
    <property type="project" value="RHEA"/>
</dbReference>
<dbReference type="GO" id="GO:0046872">
    <property type="term" value="F:metal ion binding"/>
    <property type="evidence" value="ECO:0007669"/>
    <property type="project" value="UniProtKB-KW"/>
</dbReference>
<dbReference type="GO" id="GO:0006281">
    <property type="term" value="P:DNA repair"/>
    <property type="evidence" value="ECO:0007669"/>
    <property type="project" value="UniProtKB-KW"/>
</dbReference>
<dbReference type="GO" id="GO:0006260">
    <property type="term" value="P:DNA replication"/>
    <property type="evidence" value="ECO:0007669"/>
    <property type="project" value="UniProtKB-KW"/>
</dbReference>
<dbReference type="CDD" id="cd07067">
    <property type="entry name" value="HP_PGM_like"/>
    <property type="match status" value="1"/>
</dbReference>
<dbReference type="CDD" id="cd03673">
    <property type="entry name" value="NUDIX_Ap6A_hydrolase"/>
    <property type="match status" value="1"/>
</dbReference>
<dbReference type="Gene3D" id="3.90.79.10">
    <property type="entry name" value="Nucleoside Triphosphate Pyrophosphohydrolase"/>
    <property type="match status" value="1"/>
</dbReference>
<dbReference type="Gene3D" id="3.40.50.1240">
    <property type="entry name" value="Phosphoglycerate mutase-like"/>
    <property type="match status" value="1"/>
</dbReference>
<dbReference type="InterPro" id="IPR013078">
    <property type="entry name" value="His_Pase_superF_clade-1"/>
</dbReference>
<dbReference type="InterPro" id="IPR029033">
    <property type="entry name" value="His_PPase_superfam"/>
</dbReference>
<dbReference type="InterPro" id="IPR020476">
    <property type="entry name" value="Nudix_hydrolase"/>
</dbReference>
<dbReference type="InterPro" id="IPR015797">
    <property type="entry name" value="NUDIX_hydrolase-like_dom_sf"/>
</dbReference>
<dbReference type="InterPro" id="IPR020084">
    <property type="entry name" value="NUDIX_hydrolase_CS"/>
</dbReference>
<dbReference type="InterPro" id="IPR000086">
    <property type="entry name" value="NUDIX_hydrolase_dom"/>
</dbReference>
<dbReference type="PANTHER" id="PTHR43222:SF9">
    <property type="entry name" value="8-OXO-(D)GTP PHOSPHATASE"/>
    <property type="match status" value="1"/>
</dbReference>
<dbReference type="PANTHER" id="PTHR43222">
    <property type="entry name" value="NUDIX HYDROLASE 23"/>
    <property type="match status" value="1"/>
</dbReference>
<dbReference type="Pfam" id="PF00300">
    <property type="entry name" value="His_Phos_1"/>
    <property type="match status" value="1"/>
</dbReference>
<dbReference type="Pfam" id="PF00293">
    <property type="entry name" value="NUDIX"/>
    <property type="match status" value="1"/>
</dbReference>
<dbReference type="PRINTS" id="PR00502">
    <property type="entry name" value="NUDIXFAMILY"/>
</dbReference>
<dbReference type="SMART" id="SM00855">
    <property type="entry name" value="PGAM"/>
    <property type="match status" value="1"/>
</dbReference>
<dbReference type="SUPFAM" id="SSF55811">
    <property type="entry name" value="Nudix"/>
    <property type="match status" value="1"/>
</dbReference>
<dbReference type="SUPFAM" id="SSF53254">
    <property type="entry name" value="Phosphoglycerate mutase-like"/>
    <property type="match status" value="1"/>
</dbReference>
<dbReference type="PROSITE" id="PS51462">
    <property type="entry name" value="NUDIX"/>
    <property type="match status" value="1"/>
</dbReference>
<dbReference type="PROSITE" id="PS00893">
    <property type="entry name" value="NUDIX_BOX"/>
    <property type="match status" value="1"/>
</dbReference>
<comment type="function">
    <text evidence="3 4 5">Catalyzes the conversion of 8-oxo-dGTP to 8-oxo-dGDP, and 8-oxo-GTP to 8-oxo-GDP (PubMed:16585780, PubMed:28375146). At high enzyme concentrations, can also catalyze the conversion of 8-oxo-dGDP to 8-oxo-dGMP, and 8-oxo-GDP to 8-oxo-GMP (PubMed:28375146). In addition, catalyzes the hydrolysis of the diadenosine polyphosphates diadenosine hexaphosphate (Ap6A), diadenosine pentaphosphate (Ap5A) and diadenosine tetraphosphate (Ap4A) (PubMed:28705712).</text>
</comment>
<comment type="catalytic activity">
    <reaction evidence="4">
        <text>8-oxo-dGTP + H2O = 8-oxo-dGDP + phosphate + H(+)</text>
        <dbReference type="Rhea" id="RHEA:59980"/>
        <dbReference type="ChEBI" id="CHEBI:15377"/>
        <dbReference type="ChEBI" id="CHEBI:15378"/>
        <dbReference type="ChEBI" id="CHEBI:43474"/>
        <dbReference type="ChEBI" id="CHEBI:63715"/>
        <dbReference type="ChEBI" id="CHEBI:77896"/>
        <dbReference type="EC" id="3.6.1.69"/>
    </reaction>
</comment>
<comment type="catalytic activity">
    <reaction evidence="4">
        <text>8-oxo-GTP + H2O = 8-oxo-GDP + phosphate + H(+)</text>
        <dbReference type="Rhea" id="RHEA:60032"/>
        <dbReference type="ChEBI" id="CHEBI:15377"/>
        <dbReference type="ChEBI" id="CHEBI:15378"/>
        <dbReference type="ChEBI" id="CHEBI:43474"/>
        <dbReference type="ChEBI" id="CHEBI:143553"/>
        <dbReference type="ChEBI" id="CHEBI:143554"/>
        <dbReference type="EC" id="3.6.1.69"/>
    </reaction>
</comment>
<comment type="catalytic activity">
    <reaction evidence="4">
        <text>8-oxo-dGDP + H2O = 8-oxo-dGMP + phosphate + H(+)</text>
        <dbReference type="Rhea" id="RHEA:32063"/>
        <dbReference type="ChEBI" id="CHEBI:15377"/>
        <dbReference type="ChEBI" id="CHEBI:15378"/>
        <dbReference type="ChEBI" id="CHEBI:43474"/>
        <dbReference type="ChEBI" id="CHEBI:63224"/>
        <dbReference type="ChEBI" id="CHEBI:63715"/>
        <dbReference type="EC" id="3.6.1.58"/>
    </reaction>
</comment>
<comment type="catalytic activity">
    <reaction evidence="4">
        <text>8-oxo-GDP + H2O = 8-oxo-GMP + phosphate + H(+)</text>
        <dbReference type="Rhea" id="RHEA:62356"/>
        <dbReference type="ChEBI" id="CHEBI:15377"/>
        <dbReference type="ChEBI" id="CHEBI:15378"/>
        <dbReference type="ChEBI" id="CHEBI:43474"/>
        <dbReference type="ChEBI" id="CHEBI:143554"/>
        <dbReference type="ChEBI" id="CHEBI:145694"/>
        <dbReference type="EC" id="3.6.1.58"/>
    </reaction>
</comment>
<comment type="catalytic activity">
    <reaction evidence="5">
        <text>P(1),P(6)-bis(5'-adenosyl) hexaphosphate + H2O = 2 ATP + 2 H(+)</text>
        <dbReference type="Rhea" id="RHEA:32043"/>
        <dbReference type="ChEBI" id="CHEBI:15377"/>
        <dbReference type="ChEBI" id="CHEBI:15378"/>
        <dbReference type="ChEBI" id="CHEBI:30616"/>
        <dbReference type="ChEBI" id="CHEBI:63740"/>
        <dbReference type="EC" id="3.6.1.61"/>
    </reaction>
</comment>
<comment type="catalytic activity">
    <reaction evidence="5">
        <text>P(1),P(5)-bis(5'-adenosyl) pentaphosphate + H2O = ADP + ATP + 2 H(+)</text>
        <dbReference type="Rhea" id="RHEA:30527"/>
        <dbReference type="ChEBI" id="CHEBI:15377"/>
        <dbReference type="ChEBI" id="CHEBI:15378"/>
        <dbReference type="ChEBI" id="CHEBI:30616"/>
        <dbReference type="ChEBI" id="CHEBI:62041"/>
        <dbReference type="ChEBI" id="CHEBI:456216"/>
        <dbReference type="EC" id="3.6.1.61"/>
    </reaction>
</comment>
<comment type="catalytic activity">
    <reaction evidence="5">
        <text>P(1),P(4)-bis(5'-adenosyl) tetraphosphate + H2O = AMP + ATP + 2 H(+)</text>
        <dbReference type="Rhea" id="RHEA:32039"/>
        <dbReference type="ChEBI" id="CHEBI:15377"/>
        <dbReference type="ChEBI" id="CHEBI:15378"/>
        <dbReference type="ChEBI" id="CHEBI:30616"/>
        <dbReference type="ChEBI" id="CHEBI:58141"/>
        <dbReference type="ChEBI" id="CHEBI:456215"/>
        <dbReference type="EC" id="3.6.1.61"/>
    </reaction>
</comment>
<comment type="cofactor">
    <cofactor evidence="4 5">
        <name>Mg(2+)</name>
        <dbReference type="ChEBI" id="CHEBI:18420"/>
    </cofactor>
    <text evidence="5">Can also use Mn(2+), with lower efficiency.</text>
</comment>
<comment type="activity regulation">
    <text evidence="5">Ap4A hydrolysis is inhibited by fluoride ions.</text>
</comment>
<comment type="subunit">
    <text evidence="4">Forms head-to-tail homodimers.</text>
</comment>
<comment type="domain">
    <text evidence="4">Contains an N-terminal Nudix hydrolase domain, followed by a linker region and a C-terminal histidine phosphatase domain. The C-terminal domain is necessary for efficient catalysis by the Nudix hydrolase domain.</text>
</comment>
<comment type="disruption phenotype">
    <text evidence="3">12-fold spontaneous mutation frequency increase by rifampicin resistance screening.</text>
</comment>
<comment type="similarity">
    <text evidence="8">Belongs to the Nudix hydrolase family.</text>
</comment>
<comment type="sequence caution" evidence="8">
    <conflict type="erroneous initiation">
        <sequence resource="EMBL-CDS" id="AFP38798"/>
    </conflict>
    <text>Truncated N-terminus.</text>
</comment>